<name>AT2C1_HUMAN</name>
<dbReference type="EC" id="7.2.2.10" evidence="11 16"/>
<dbReference type="EMBL" id="AF181120">
    <property type="protein sequence ID" value="AAF26295.1"/>
    <property type="molecule type" value="mRNA"/>
</dbReference>
<dbReference type="EMBL" id="AF181121">
    <property type="protein sequence ID" value="AAF26296.1"/>
    <property type="molecule type" value="mRNA"/>
</dbReference>
<dbReference type="EMBL" id="AF189723">
    <property type="protein sequence ID" value="AAF27813.2"/>
    <property type="molecule type" value="mRNA"/>
</dbReference>
<dbReference type="EMBL" id="AF225981">
    <property type="protein sequence ID" value="AAF35375.1"/>
    <property type="molecule type" value="mRNA"/>
</dbReference>
<dbReference type="EMBL" id="AY268374">
    <property type="protein sequence ID" value="AAP30008.1"/>
    <property type="molecule type" value="mRNA"/>
</dbReference>
<dbReference type="EMBL" id="AY268375">
    <property type="protein sequence ID" value="AAP30009.1"/>
    <property type="molecule type" value="mRNA"/>
</dbReference>
<dbReference type="EMBL" id="AB037768">
    <property type="protein sequence ID" value="BAA92585.1"/>
    <property type="status" value="ALT_FRAME"/>
    <property type="molecule type" value="mRNA"/>
</dbReference>
<dbReference type="EMBL" id="AK001684">
    <property type="protein sequence ID" value="BAA91835.1"/>
    <property type="molecule type" value="mRNA"/>
</dbReference>
<dbReference type="EMBL" id="AK074692">
    <property type="protein sequence ID" value="BAC11142.1"/>
    <property type="status" value="ALT_INIT"/>
    <property type="molecule type" value="mRNA"/>
</dbReference>
<dbReference type="EMBL" id="AK296470">
    <property type="protein sequence ID" value="BAH12365.1"/>
    <property type="molecule type" value="mRNA"/>
</dbReference>
<dbReference type="EMBL" id="AK299945">
    <property type="protein sequence ID" value="BAG61775.1"/>
    <property type="molecule type" value="mRNA"/>
</dbReference>
<dbReference type="EMBL" id="AK314342">
    <property type="protein sequence ID" value="BAG36984.1"/>
    <property type="molecule type" value="mRNA"/>
</dbReference>
<dbReference type="EMBL" id="AC055733">
    <property type="status" value="NOT_ANNOTATED_CDS"/>
    <property type="molecule type" value="Genomic_DNA"/>
</dbReference>
<dbReference type="EMBL" id="AC097105">
    <property type="status" value="NOT_ANNOTATED_CDS"/>
    <property type="molecule type" value="Genomic_DNA"/>
</dbReference>
<dbReference type="EMBL" id="CH471052">
    <property type="protein sequence ID" value="EAW79218.1"/>
    <property type="molecule type" value="Genomic_DNA"/>
</dbReference>
<dbReference type="EMBL" id="CH471052">
    <property type="protein sequence ID" value="EAW79219.1"/>
    <property type="molecule type" value="Genomic_DNA"/>
</dbReference>
<dbReference type="EMBL" id="BC028139">
    <property type="protein sequence ID" value="AAH28139.1"/>
    <property type="molecule type" value="mRNA"/>
</dbReference>
<dbReference type="EMBL" id="AJ010953">
    <property type="protein sequence ID" value="CAA09425.1"/>
    <property type="molecule type" value="mRNA"/>
</dbReference>
<dbReference type="CCDS" id="CCDS33856.1">
    <molecule id="P98194-9"/>
</dbReference>
<dbReference type="CCDS" id="CCDS46912.1">
    <molecule id="P98194-5"/>
</dbReference>
<dbReference type="CCDS" id="CCDS46913.1">
    <molecule id="P98194-2"/>
</dbReference>
<dbReference type="CCDS" id="CCDS46914.1">
    <molecule id="P98194-1"/>
</dbReference>
<dbReference type="CCDS" id="CCDS56278.1">
    <molecule id="P98194-7"/>
</dbReference>
<dbReference type="CCDS" id="CCDS56279.1">
    <molecule id="P98194-8"/>
</dbReference>
<dbReference type="CCDS" id="CCDS56280.1">
    <molecule id="P98194-3"/>
</dbReference>
<dbReference type="CCDS" id="CCDS56281.1">
    <molecule id="P98194-4"/>
</dbReference>
<dbReference type="RefSeq" id="NP_001001485.1">
    <molecule id="P98194-2"/>
    <property type="nucleotide sequence ID" value="NM_001001485.3"/>
</dbReference>
<dbReference type="RefSeq" id="NP_001001486.1">
    <molecule id="P98194-9"/>
    <property type="nucleotide sequence ID" value="NM_001001486.2"/>
</dbReference>
<dbReference type="RefSeq" id="NP_001001487.1">
    <molecule id="P98194-5"/>
    <property type="nucleotide sequence ID" value="NM_001001487.2"/>
</dbReference>
<dbReference type="RefSeq" id="NP_001186108.1">
    <molecule id="P98194-1"/>
    <property type="nucleotide sequence ID" value="NM_001199179.3"/>
</dbReference>
<dbReference type="RefSeq" id="NP_001186109.1">
    <molecule id="P98194-7"/>
    <property type="nucleotide sequence ID" value="NM_001199180.2"/>
</dbReference>
<dbReference type="RefSeq" id="NP_001186110.1">
    <property type="nucleotide sequence ID" value="NM_001199181.1"/>
</dbReference>
<dbReference type="RefSeq" id="NP_001186111.1">
    <molecule id="P98194-8"/>
    <property type="nucleotide sequence ID" value="NM_001199182.2"/>
</dbReference>
<dbReference type="RefSeq" id="NP_001186112.1">
    <molecule id="P98194-3"/>
    <property type="nucleotide sequence ID" value="NM_001199183.2"/>
</dbReference>
<dbReference type="RefSeq" id="NP_001186113.1">
    <molecule id="P98194-4"/>
    <property type="nucleotide sequence ID" value="NM_001199184.3"/>
</dbReference>
<dbReference type="RefSeq" id="NP_001186114.1">
    <molecule id="P98194-2"/>
    <property type="nucleotide sequence ID" value="NM_001199185.2"/>
</dbReference>
<dbReference type="RefSeq" id="NP_001365441.1">
    <molecule id="P98194-9"/>
    <property type="nucleotide sequence ID" value="NM_001378512.1"/>
</dbReference>
<dbReference type="RefSeq" id="NP_001365442.1">
    <molecule id="P98194-5"/>
    <property type="nucleotide sequence ID" value="NM_001378513.1"/>
</dbReference>
<dbReference type="RefSeq" id="NP_001365616.1">
    <molecule id="P98194-1"/>
    <property type="nucleotide sequence ID" value="NM_001378687.1"/>
</dbReference>
<dbReference type="RefSeq" id="NP_055197.2">
    <molecule id="P98194-1"/>
    <property type="nucleotide sequence ID" value="NM_014382.3"/>
</dbReference>
<dbReference type="RefSeq" id="XP_005247412.1">
    <property type="nucleotide sequence ID" value="XM_005247355.2"/>
</dbReference>
<dbReference type="RefSeq" id="XP_005247413.1">
    <property type="nucleotide sequence ID" value="XM_005247356.2"/>
</dbReference>
<dbReference type="RefSeq" id="XP_016861653.1">
    <property type="nucleotide sequence ID" value="XM_017006164.1"/>
</dbReference>
<dbReference type="PDB" id="7YAG">
    <property type="method" value="EM"/>
    <property type="resolution" value="3.10 A"/>
    <property type="chains" value="A=1-919"/>
</dbReference>
<dbReference type="PDB" id="7YAH">
    <property type="method" value="EM"/>
    <property type="resolution" value="3.12 A"/>
    <property type="chains" value="A=1-919"/>
</dbReference>
<dbReference type="PDB" id="7YAI">
    <property type="method" value="EM"/>
    <property type="resolution" value="3.14 A"/>
    <property type="chains" value="A=1-919"/>
</dbReference>
<dbReference type="PDB" id="7YAJ">
    <property type="method" value="EM"/>
    <property type="resolution" value="3.16 A"/>
    <property type="chains" value="A=1-919"/>
</dbReference>
<dbReference type="PDB" id="7YAM">
    <property type="method" value="EM"/>
    <property type="resolution" value="3.30 A"/>
    <property type="chains" value="A=1-919"/>
</dbReference>
<dbReference type="PDB" id="8IWP">
    <property type="method" value="EM"/>
    <property type="resolution" value="3.59 A"/>
    <property type="chains" value="A=1-919"/>
</dbReference>
<dbReference type="PDB" id="8IWR">
    <property type="method" value="EM"/>
    <property type="resolution" value="3.52 A"/>
    <property type="chains" value="A=1-919"/>
</dbReference>
<dbReference type="PDB" id="8IWS">
    <property type="method" value="EM"/>
    <property type="resolution" value="3.42 A"/>
    <property type="chains" value="A=1-919"/>
</dbReference>
<dbReference type="PDB" id="8IWT">
    <property type="method" value="EM"/>
    <property type="resolution" value="3.25 A"/>
    <property type="chains" value="A=1-919"/>
</dbReference>
<dbReference type="PDB" id="8IWU">
    <property type="method" value="EM"/>
    <property type="resolution" value="3.31 A"/>
    <property type="chains" value="A=1-919"/>
</dbReference>
<dbReference type="PDB" id="8IWW">
    <property type="method" value="EM"/>
    <property type="resolution" value="3.71 A"/>
    <property type="chains" value="A=17-909"/>
</dbReference>
<dbReference type="PDBsum" id="7YAG"/>
<dbReference type="PDBsum" id="7YAH"/>
<dbReference type="PDBsum" id="7YAI"/>
<dbReference type="PDBsum" id="7YAJ"/>
<dbReference type="PDBsum" id="7YAM"/>
<dbReference type="PDBsum" id="8IWP"/>
<dbReference type="PDBsum" id="8IWR"/>
<dbReference type="PDBsum" id="8IWS"/>
<dbReference type="PDBsum" id="8IWT"/>
<dbReference type="PDBsum" id="8IWU"/>
<dbReference type="PDBsum" id="8IWW"/>
<dbReference type="EMDB" id="EMD-33711"/>
<dbReference type="EMDB" id="EMD-33712"/>
<dbReference type="EMDB" id="EMD-33713"/>
<dbReference type="EMDB" id="EMD-33714"/>
<dbReference type="EMDB" id="EMD-33717"/>
<dbReference type="EMDB" id="EMD-35776"/>
<dbReference type="EMDB" id="EMD-35777"/>
<dbReference type="EMDB" id="EMD-35778"/>
<dbReference type="EMDB" id="EMD-35779"/>
<dbReference type="EMDB" id="EMD-35780"/>
<dbReference type="EMDB" id="EMD-35781"/>
<dbReference type="SMR" id="P98194"/>
<dbReference type="BioGRID" id="117963">
    <property type="interactions" value="136"/>
</dbReference>
<dbReference type="FunCoup" id="P98194">
    <property type="interactions" value="2003"/>
</dbReference>
<dbReference type="IntAct" id="P98194">
    <property type="interactions" value="76"/>
</dbReference>
<dbReference type="MINT" id="P98194"/>
<dbReference type="STRING" id="9606.ENSP00000421326"/>
<dbReference type="DrugBank" id="DB01373">
    <property type="generic name" value="Calcium"/>
</dbReference>
<dbReference type="DrugBank" id="DB01189">
    <property type="generic name" value="Desflurane"/>
</dbReference>
<dbReference type="DrugBank" id="DB00228">
    <property type="generic name" value="Enflurane"/>
</dbReference>
<dbReference type="DrugBank" id="DB00753">
    <property type="generic name" value="Isoflurane"/>
</dbReference>
<dbReference type="DrugBank" id="DB01028">
    <property type="generic name" value="Methoxyflurane"/>
</dbReference>
<dbReference type="DrugBank" id="DB00867">
    <property type="generic name" value="Ritodrine"/>
</dbReference>
<dbReference type="DrugBank" id="DB01236">
    <property type="generic name" value="Sevoflurane"/>
</dbReference>
<dbReference type="TCDB" id="3.A.3.2.5">
    <property type="family name" value="the p-type atpase (p-atpase) superfamily"/>
</dbReference>
<dbReference type="iPTMnet" id="P98194"/>
<dbReference type="MetOSite" id="P98194"/>
<dbReference type="PhosphoSitePlus" id="P98194"/>
<dbReference type="SwissPalm" id="P98194"/>
<dbReference type="BioMuta" id="ATP2C1"/>
<dbReference type="DMDM" id="68068024"/>
<dbReference type="jPOST" id="P98194"/>
<dbReference type="MassIVE" id="P98194"/>
<dbReference type="PaxDb" id="9606-ENSP00000421326"/>
<dbReference type="PeptideAtlas" id="P98194"/>
<dbReference type="ProteomicsDB" id="33752"/>
<dbReference type="ProteomicsDB" id="34290"/>
<dbReference type="ProteomicsDB" id="57820">
    <molecule id="P98194-1"/>
</dbReference>
<dbReference type="ProteomicsDB" id="57821">
    <molecule id="P98194-2"/>
</dbReference>
<dbReference type="ProteomicsDB" id="57822">
    <molecule id="P98194-3"/>
</dbReference>
<dbReference type="ProteomicsDB" id="57823">
    <molecule id="P98194-4"/>
</dbReference>
<dbReference type="ProteomicsDB" id="57824">
    <molecule id="P98194-5"/>
</dbReference>
<dbReference type="ProteomicsDB" id="57825">
    <molecule id="P98194-6"/>
</dbReference>
<dbReference type="Pumba" id="P98194"/>
<dbReference type="Antibodypedia" id="4128">
    <property type="antibodies" value="342 antibodies from 33 providers"/>
</dbReference>
<dbReference type="DNASU" id="27032"/>
<dbReference type="Ensembl" id="ENST00000328560.12">
    <molecule id="P98194-2"/>
    <property type="protein sequence ID" value="ENSP00000329664.8"/>
    <property type="gene ID" value="ENSG00000017260.20"/>
</dbReference>
<dbReference type="Ensembl" id="ENST00000359644.7">
    <molecule id="P98194-9"/>
    <property type="protein sequence ID" value="ENSP00000352665.3"/>
    <property type="gene ID" value="ENSG00000017260.20"/>
</dbReference>
<dbReference type="Ensembl" id="ENST00000422190.6">
    <molecule id="P98194-5"/>
    <property type="protein sequence ID" value="ENSP00000402677.2"/>
    <property type="gene ID" value="ENSG00000017260.20"/>
</dbReference>
<dbReference type="Ensembl" id="ENST00000428331.6">
    <molecule id="P98194-1"/>
    <property type="protein sequence ID" value="ENSP00000395809.2"/>
    <property type="gene ID" value="ENSG00000017260.20"/>
</dbReference>
<dbReference type="Ensembl" id="ENST00000504381.5">
    <molecule id="P98194-8"/>
    <property type="protein sequence ID" value="ENSP00000425320.2"/>
    <property type="gene ID" value="ENSG00000017260.20"/>
</dbReference>
<dbReference type="Ensembl" id="ENST00000504948.5">
    <molecule id="P98194-4"/>
    <property type="protein sequence ID" value="ENSP00000423330.1"/>
    <property type="gene ID" value="ENSG00000017260.20"/>
</dbReference>
<dbReference type="Ensembl" id="ENST00000507488.6">
    <molecule id="P98194-7"/>
    <property type="protein sequence ID" value="ENSP00000421326.3"/>
    <property type="gene ID" value="ENSG00000017260.20"/>
</dbReference>
<dbReference type="Ensembl" id="ENST00000508532.5">
    <molecule id="P98194-1"/>
    <property type="protein sequence ID" value="ENSP00000424783.1"/>
    <property type="gene ID" value="ENSG00000017260.20"/>
</dbReference>
<dbReference type="Ensembl" id="ENST00000510168.6">
    <molecule id="P98194-1"/>
    <property type="protein sequence ID" value="ENSP00000427461.1"/>
    <property type="gene ID" value="ENSG00000017260.20"/>
</dbReference>
<dbReference type="Ensembl" id="ENST00000513801.5">
    <molecule id="P98194-3"/>
    <property type="protein sequence ID" value="ENSP00000422872.1"/>
    <property type="gene ID" value="ENSG00000017260.20"/>
</dbReference>
<dbReference type="Ensembl" id="ENST00000533801.6">
    <molecule id="P98194-2"/>
    <property type="protein sequence ID" value="ENSP00000432956.3"/>
    <property type="gene ID" value="ENSG00000017260.20"/>
</dbReference>
<dbReference type="GeneID" id="27032"/>
<dbReference type="KEGG" id="hsa:27032"/>
<dbReference type="MANE-Select" id="ENST00000510168.6">
    <property type="protein sequence ID" value="ENSP00000427461.1"/>
    <property type="RefSeq nucleotide sequence ID" value="NM_001378687.1"/>
    <property type="RefSeq protein sequence ID" value="NP_001365616.1"/>
</dbReference>
<dbReference type="UCSC" id="uc003enk.4">
    <molecule id="P98194-1"/>
    <property type="organism name" value="human"/>
</dbReference>
<dbReference type="AGR" id="HGNC:13211"/>
<dbReference type="CTD" id="27032"/>
<dbReference type="DisGeNET" id="27032"/>
<dbReference type="GeneCards" id="ATP2C1"/>
<dbReference type="HGNC" id="HGNC:13211">
    <property type="gene designation" value="ATP2C1"/>
</dbReference>
<dbReference type="HPA" id="ENSG00000017260">
    <property type="expression patterns" value="Low tissue specificity"/>
</dbReference>
<dbReference type="MalaCards" id="ATP2C1"/>
<dbReference type="MIM" id="169600">
    <property type="type" value="phenotype"/>
</dbReference>
<dbReference type="MIM" id="604384">
    <property type="type" value="gene"/>
</dbReference>
<dbReference type="neXtProt" id="NX_P98194"/>
<dbReference type="OpenTargets" id="ENSG00000017260"/>
<dbReference type="Orphanet" id="2841">
    <property type="disease" value="Hailey-Hailey disease"/>
</dbReference>
<dbReference type="PharmGKB" id="PA25111"/>
<dbReference type="VEuPathDB" id="HostDB:ENSG00000017260"/>
<dbReference type="eggNOG" id="KOG0202">
    <property type="taxonomic scope" value="Eukaryota"/>
</dbReference>
<dbReference type="GeneTree" id="ENSGT00940000156421"/>
<dbReference type="HOGENOM" id="CLU_002360_3_3_1"/>
<dbReference type="InParanoid" id="P98194"/>
<dbReference type="OMA" id="KMHACET"/>
<dbReference type="OrthoDB" id="9522003at2759"/>
<dbReference type="PAN-GO" id="P98194">
    <property type="GO annotations" value="8 GO annotations based on evolutionary models"/>
</dbReference>
<dbReference type="PhylomeDB" id="P98194"/>
<dbReference type="TreeFam" id="TF354251"/>
<dbReference type="BRENDA" id="7.2.2.10">
    <property type="organism ID" value="2681"/>
</dbReference>
<dbReference type="PathwayCommons" id="P98194"/>
<dbReference type="Reactome" id="R-HSA-936837">
    <property type="pathway name" value="Ion transport by P-type ATPases"/>
</dbReference>
<dbReference type="SABIO-RK" id="P98194"/>
<dbReference type="SignaLink" id="P98194"/>
<dbReference type="SIGNOR" id="P98194"/>
<dbReference type="BioGRID-ORCS" id="27032">
    <property type="hits" value="56 hits in 1170 CRISPR screens"/>
</dbReference>
<dbReference type="CD-CODE" id="DEE660B4">
    <property type="entry name" value="Stress granule"/>
</dbReference>
<dbReference type="ChiTaRS" id="ATP2C1">
    <property type="organism name" value="human"/>
</dbReference>
<dbReference type="GeneWiki" id="ATP2C1"/>
<dbReference type="GenomeRNAi" id="27032"/>
<dbReference type="Pharos" id="P98194">
    <property type="development level" value="Tbio"/>
</dbReference>
<dbReference type="PRO" id="PR:P98194"/>
<dbReference type="Proteomes" id="UP000005640">
    <property type="component" value="Chromosome 3"/>
</dbReference>
<dbReference type="RNAct" id="P98194">
    <property type="molecule type" value="protein"/>
</dbReference>
<dbReference type="Bgee" id="ENSG00000017260">
    <property type="expression patterns" value="Expressed in cortical plate and 203 other cell types or tissues"/>
</dbReference>
<dbReference type="ExpressionAtlas" id="P98194">
    <property type="expression patterns" value="baseline and differential"/>
</dbReference>
<dbReference type="GO" id="GO:0033106">
    <property type="term" value="C:cis-Golgi network membrane"/>
    <property type="evidence" value="ECO:0000250"/>
    <property type="project" value="UniProtKB"/>
</dbReference>
<dbReference type="GO" id="GO:0005783">
    <property type="term" value="C:endoplasmic reticulum"/>
    <property type="evidence" value="ECO:0000318"/>
    <property type="project" value="GO_Central"/>
</dbReference>
<dbReference type="GO" id="GO:0005794">
    <property type="term" value="C:Golgi apparatus"/>
    <property type="evidence" value="ECO:0000314"/>
    <property type="project" value="HPA"/>
</dbReference>
<dbReference type="GO" id="GO:0032580">
    <property type="term" value="C:Golgi cisterna membrane"/>
    <property type="evidence" value="ECO:0000250"/>
    <property type="project" value="UniProtKB"/>
</dbReference>
<dbReference type="GO" id="GO:0000139">
    <property type="term" value="C:Golgi membrane"/>
    <property type="evidence" value="ECO:0000314"/>
    <property type="project" value="UniProtKB"/>
</dbReference>
<dbReference type="GO" id="GO:0016020">
    <property type="term" value="C:membrane"/>
    <property type="evidence" value="ECO:0007005"/>
    <property type="project" value="UniProtKB"/>
</dbReference>
<dbReference type="GO" id="GO:0005886">
    <property type="term" value="C:plasma membrane"/>
    <property type="evidence" value="ECO:0000318"/>
    <property type="project" value="GO_Central"/>
</dbReference>
<dbReference type="GO" id="GO:0005802">
    <property type="term" value="C:trans-Golgi network"/>
    <property type="evidence" value="ECO:0000314"/>
    <property type="project" value="UniProtKB"/>
</dbReference>
<dbReference type="GO" id="GO:0005524">
    <property type="term" value="F:ATP binding"/>
    <property type="evidence" value="ECO:0000314"/>
    <property type="project" value="UniProtKB"/>
</dbReference>
<dbReference type="GO" id="GO:0016887">
    <property type="term" value="F:ATP hydrolysis activity"/>
    <property type="evidence" value="ECO:0007669"/>
    <property type="project" value="InterPro"/>
</dbReference>
<dbReference type="GO" id="GO:0005509">
    <property type="term" value="F:calcium ion binding"/>
    <property type="evidence" value="ECO:0000314"/>
    <property type="project" value="UniProtKB"/>
</dbReference>
<dbReference type="GO" id="GO:0030145">
    <property type="term" value="F:manganese ion binding"/>
    <property type="evidence" value="ECO:0000314"/>
    <property type="project" value="UniProtKB"/>
</dbReference>
<dbReference type="GO" id="GO:0046872">
    <property type="term" value="F:metal ion binding"/>
    <property type="evidence" value="ECO:0007669"/>
    <property type="project" value="UniProtKB-KW"/>
</dbReference>
<dbReference type="GO" id="GO:0005388">
    <property type="term" value="F:P-type calcium transporter activity"/>
    <property type="evidence" value="ECO:0000314"/>
    <property type="project" value="UniProtKB"/>
</dbReference>
<dbReference type="GO" id="GO:0140613">
    <property type="term" value="F:P-type manganese transporter activity"/>
    <property type="evidence" value="ECO:0000314"/>
    <property type="project" value="UniProtKB"/>
</dbReference>
<dbReference type="GO" id="GO:0030036">
    <property type="term" value="P:actin cytoskeleton organization"/>
    <property type="evidence" value="ECO:0000315"/>
    <property type="project" value="UniProtKB"/>
</dbReference>
<dbReference type="GO" id="GO:0070588">
    <property type="term" value="P:calcium ion transmembrane transport"/>
    <property type="evidence" value="ECO:0000318"/>
    <property type="project" value="GO_Central"/>
</dbReference>
<dbReference type="GO" id="GO:0006816">
    <property type="term" value="P:calcium ion transport"/>
    <property type="evidence" value="ECO:0000314"/>
    <property type="project" value="UniProtKB"/>
</dbReference>
<dbReference type="GO" id="GO:0016339">
    <property type="term" value="P:calcium-dependent cell-cell adhesion via plasma membrane cell adhesion molecules"/>
    <property type="evidence" value="ECO:0000315"/>
    <property type="project" value="UniProtKB"/>
</dbReference>
<dbReference type="GO" id="GO:0008544">
    <property type="term" value="P:epidermis development"/>
    <property type="evidence" value="ECO:0000315"/>
    <property type="project" value="UniProtKB"/>
</dbReference>
<dbReference type="GO" id="GO:0032468">
    <property type="term" value="P:Golgi calcium ion homeostasis"/>
    <property type="evidence" value="ECO:0000315"/>
    <property type="project" value="UniProtKB"/>
</dbReference>
<dbReference type="GO" id="GO:0032472">
    <property type="term" value="P:Golgi calcium ion transport"/>
    <property type="evidence" value="ECO:0000315"/>
    <property type="project" value="UniProtKB"/>
</dbReference>
<dbReference type="GO" id="GO:0006874">
    <property type="term" value="P:intracellular calcium ion homeostasis"/>
    <property type="evidence" value="ECO:0000314"/>
    <property type="project" value="UniProtKB"/>
</dbReference>
<dbReference type="GO" id="GO:0030026">
    <property type="term" value="P:intracellular manganese ion homeostasis"/>
    <property type="evidence" value="ECO:0000314"/>
    <property type="project" value="UniProtKB"/>
</dbReference>
<dbReference type="GO" id="GO:0006828">
    <property type="term" value="P:manganese ion transport"/>
    <property type="evidence" value="ECO:0000314"/>
    <property type="project" value="UniProtKB"/>
</dbReference>
<dbReference type="GO" id="GO:0043123">
    <property type="term" value="P:positive regulation of canonical NF-kappaB signal transduction"/>
    <property type="evidence" value="ECO:0007001"/>
    <property type="project" value="UniProtKB"/>
</dbReference>
<dbReference type="GO" id="GO:0042998">
    <property type="term" value="P:positive regulation of Golgi to plasma membrane protein transport"/>
    <property type="evidence" value="ECO:0000315"/>
    <property type="project" value="UniProtKB"/>
</dbReference>
<dbReference type="GO" id="GO:0098629">
    <property type="term" value="P:trans-Golgi network membrane organization"/>
    <property type="evidence" value="ECO:0000315"/>
    <property type="project" value="UniProtKB"/>
</dbReference>
<dbReference type="CDD" id="cd02085">
    <property type="entry name" value="P-type_ATPase_SPCA"/>
    <property type="match status" value="1"/>
</dbReference>
<dbReference type="FunFam" id="2.70.150.10:FF:000008">
    <property type="entry name" value="Calcium-transporting ATPase"/>
    <property type="match status" value="1"/>
</dbReference>
<dbReference type="FunFam" id="3.40.1110.10:FF:000006">
    <property type="entry name" value="Calcium-transporting ATPase"/>
    <property type="match status" value="1"/>
</dbReference>
<dbReference type="FunFam" id="3.40.50.1000:FF:000017">
    <property type="entry name" value="Calcium-transporting ATPase"/>
    <property type="match status" value="1"/>
</dbReference>
<dbReference type="FunFam" id="3.40.50.1000:FF:000001">
    <property type="entry name" value="Phospholipid-transporting ATPase IC"/>
    <property type="match status" value="1"/>
</dbReference>
<dbReference type="Gene3D" id="3.40.1110.10">
    <property type="entry name" value="Calcium-transporting ATPase, cytoplasmic domain N"/>
    <property type="match status" value="1"/>
</dbReference>
<dbReference type="Gene3D" id="2.70.150.10">
    <property type="entry name" value="Calcium-transporting ATPase, cytoplasmic transduction domain A"/>
    <property type="match status" value="1"/>
</dbReference>
<dbReference type="Gene3D" id="1.20.1110.10">
    <property type="entry name" value="Calcium-transporting ATPase, transmembrane domain"/>
    <property type="match status" value="1"/>
</dbReference>
<dbReference type="Gene3D" id="3.40.50.1000">
    <property type="entry name" value="HAD superfamily/HAD-like"/>
    <property type="match status" value="1"/>
</dbReference>
<dbReference type="InterPro" id="IPR006068">
    <property type="entry name" value="ATPase_P-typ_cation-transptr_C"/>
</dbReference>
<dbReference type="InterPro" id="IPR004014">
    <property type="entry name" value="ATPase_P-typ_cation-transptr_N"/>
</dbReference>
<dbReference type="InterPro" id="IPR023299">
    <property type="entry name" value="ATPase_P-typ_cyto_dom_N"/>
</dbReference>
<dbReference type="InterPro" id="IPR018303">
    <property type="entry name" value="ATPase_P-typ_P_site"/>
</dbReference>
<dbReference type="InterPro" id="IPR023298">
    <property type="entry name" value="ATPase_P-typ_TM_dom_sf"/>
</dbReference>
<dbReference type="InterPro" id="IPR008250">
    <property type="entry name" value="ATPase_P-typ_transduc_dom_A_sf"/>
</dbReference>
<dbReference type="InterPro" id="IPR036412">
    <property type="entry name" value="HAD-like_sf"/>
</dbReference>
<dbReference type="InterPro" id="IPR023214">
    <property type="entry name" value="HAD_sf"/>
</dbReference>
<dbReference type="InterPro" id="IPR006413">
    <property type="entry name" value="P-type_ATPase_IIA_PMR1"/>
</dbReference>
<dbReference type="InterPro" id="IPR001757">
    <property type="entry name" value="P_typ_ATPase"/>
</dbReference>
<dbReference type="InterPro" id="IPR044492">
    <property type="entry name" value="P_typ_ATPase_HD_dom"/>
</dbReference>
<dbReference type="NCBIfam" id="TIGR01522">
    <property type="entry name" value="ATPase-IIA2_Ca"/>
    <property type="match status" value="1"/>
</dbReference>
<dbReference type="NCBIfam" id="TIGR01494">
    <property type="entry name" value="ATPase_P-type"/>
    <property type="match status" value="3"/>
</dbReference>
<dbReference type="PANTHER" id="PTHR42861">
    <property type="entry name" value="CALCIUM-TRANSPORTING ATPASE"/>
    <property type="match status" value="1"/>
</dbReference>
<dbReference type="Pfam" id="PF13246">
    <property type="entry name" value="Cation_ATPase"/>
    <property type="match status" value="1"/>
</dbReference>
<dbReference type="Pfam" id="PF00689">
    <property type="entry name" value="Cation_ATPase_C"/>
    <property type="match status" value="1"/>
</dbReference>
<dbReference type="Pfam" id="PF00690">
    <property type="entry name" value="Cation_ATPase_N"/>
    <property type="match status" value="1"/>
</dbReference>
<dbReference type="Pfam" id="PF00122">
    <property type="entry name" value="E1-E2_ATPase"/>
    <property type="match status" value="1"/>
</dbReference>
<dbReference type="PRINTS" id="PR00119">
    <property type="entry name" value="CATATPASE"/>
</dbReference>
<dbReference type="PRINTS" id="PR00120">
    <property type="entry name" value="HATPASE"/>
</dbReference>
<dbReference type="SFLD" id="SFLDG00002">
    <property type="entry name" value="C1.7:_P-type_atpase_like"/>
    <property type="match status" value="1"/>
</dbReference>
<dbReference type="SFLD" id="SFLDF00027">
    <property type="entry name" value="p-type_atpase"/>
    <property type="match status" value="1"/>
</dbReference>
<dbReference type="SMART" id="SM00831">
    <property type="entry name" value="Cation_ATPase_N"/>
    <property type="match status" value="1"/>
</dbReference>
<dbReference type="SUPFAM" id="SSF81653">
    <property type="entry name" value="Calcium ATPase, transduction domain A"/>
    <property type="match status" value="1"/>
</dbReference>
<dbReference type="SUPFAM" id="SSF81665">
    <property type="entry name" value="Calcium ATPase, transmembrane domain M"/>
    <property type="match status" value="1"/>
</dbReference>
<dbReference type="SUPFAM" id="SSF56784">
    <property type="entry name" value="HAD-like"/>
    <property type="match status" value="1"/>
</dbReference>
<dbReference type="PROSITE" id="PS00154">
    <property type="entry name" value="ATPASE_E1_E2"/>
    <property type="match status" value="1"/>
</dbReference>
<comment type="function">
    <text evidence="2 4 8 9 11 12 13 14 16">ATP-driven pump that supplies the Golgi apparatus with Ca(2+) and Mn(2+) ions, both essential cofactors for processing and trafficking of newly synthesized proteins in the secretory pathway (PubMed:12707275, PubMed:16192278, PubMed:20439740, PubMed:21187401, PubMed:30923126). Within a catalytic cycle, acquires Ca(2+) or Mn(2+) ions on the cytoplasmic side of the membrane and delivers them to the lumenal side. The transfer of ions across the membrane is coupled to ATP hydrolysis and is associated with a transient phosphorylation that shifts the pump conformation from inward-facing to outward-facing state (PubMed:16192278, PubMed:16332677, PubMed:30923126). Plays a primary role in the maintenance of Ca(2+) homeostasis in the trans-Golgi compartment with a functional impact on Golgi and post-Golgi protein sorting as well as a structural impact on cisternae morphology (PubMed:14632183, PubMed:20439740). Responsible for loading the Golgi stores with Ca(2+) ions in keratinocytes, contributing to keratinocyte differentiation and epidermis integrity (PubMed:10615129, PubMed:14632183, PubMed:20439740). Participates in Ca(2+) and Mn(2+) ions uptake into the Golgi store of hippocampal neurons and regulates protein trafficking required for neural polarity (By similarity). May also play a role in the maintenance of Ca(2+) and Mn(2+) homeostasis and signaling in the cytosol while preventing cytotoxicity (PubMed:21187401).</text>
</comment>
<comment type="catalytic activity">
    <reaction evidence="11 16">
        <text>Ca(2+)(in) + ATP + H2O = Ca(2+)(out) + ADP + phosphate + H(+)</text>
        <dbReference type="Rhea" id="RHEA:18105"/>
        <dbReference type="ChEBI" id="CHEBI:15377"/>
        <dbReference type="ChEBI" id="CHEBI:15378"/>
        <dbReference type="ChEBI" id="CHEBI:29108"/>
        <dbReference type="ChEBI" id="CHEBI:30616"/>
        <dbReference type="ChEBI" id="CHEBI:43474"/>
        <dbReference type="ChEBI" id="CHEBI:456216"/>
        <dbReference type="EC" id="7.2.2.10"/>
    </reaction>
    <physiologicalReaction direction="left-to-right" evidence="23 25">
        <dbReference type="Rhea" id="RHEA:18106"/>
    </physiologicalReaction>
</comment>
<comment type="catalytic activity">
    <reaction evidence="14">
        <text>Mn(2+)(in) + ATP + H2O = Mn(2+)(out) + ADP + phosphate + H(+)</text>
        <dbReference type="Rhea" id="RHEA:66820"/>
        <dbReference type="ChEBI" id="CHEBI:15377"/>
        <dbReference type="ChEBI" id="CHEBI:15378"/>
        <dbReference type="ChEBI" id="CHEBI:29035"/>
        <dbReference type="ChEBI" id="CHEBI:30616"/>
        <dbReference type="ChEBI" id="CHEBI:43474"/>
        <dbReference type="ChEBI" id="CHEBI:456216"/>
    </reaction>
    <physiologicalReaction direction="left-to-right" evidence="24">
        <dbReference type="Rhea" id="RHEA:66821"/>
    </physiologicalReaction>
</comment>
<comment type="biophysicochemical properties">
    <kinetics>
        <KM evidence="16">0.13 uM for Ca(2+) (Ca(2+)-dependent ATP hydrolysis)</KM>
        <KM evidence="16">0.07 uM for Mn(2+) (Mn(2+)-dependent ATP hydrolysis)</KM>
    </kinetics>
</comment>
<comment type="subunit">
    <text evidence="16">Monomer. Homodimer.</text>
</comment>
<comment type="subcellular location">
    <subcellularLocation>
        <location evidence="8 9 14">Golgi apparatus</location>
        <location evidence="8 9 14">trans-Golgi network membrane</location>
        <topology evidence="3">Multi-pass membrane protein</topology>
    </subcellularLocation>
    <subcellularLocation>
        <location evidence="14">Golgi apparatus</location>
        <location evidence="14">Golgi stack membrane</location>
        <topology evidence="3">Multi-pass membrane protein</topology>
    </subcellularLocation>
    <text evidence="2">During neuron differentiation, shifts from juxtanuclear Golgi position to multiple Golgi structures distributed over the neural soma with a predominance in the apical dendritic trunk.</text>
</comment>
<comment type="alternative products">
    <event type="alternative splicing"/>
    <isoform>
        <id>P98194-1</id>
        <name>1</name>
        <name evidence="17">ATP2C1A</name>
        <sequence type="displayed"/>
    </isoform>
    <isoform>
        <id>P98194-2</id>
        <name>2</name>
        <name>ATP2C1B</name>
        <name evidence="17">ATP2C1C</name>
        <sequence type="described" ref="VSP_000409"/>
    </isoform>
    <isoform>
        <id>P98194-3</id>
        <name>3</name>
        <name evidence="18">ATP2C1B</name>
        <sequence type="described" ref="VSP_000408 VSP_000410"/>
    </isoform>
    <isoform>
        <id>P98194-4</id>
        <name>4</name>
        <name evidence="18">ATP2C1A</name>
        <sequence type="described" ref="VSP_000408"/>
    </isoform>
    <isoform>
        <id>P98194-5</id>
        <name>5</name>
        <name evidence="19">ATP2C1B</name>
        <sequence type="described" ref="VSP_000410"/>
    </isoform>
    <isoform>
        <id>P98194-6</id>
        <name>6</name>
        <sequence type="described" ref="VSP_014102"/>
    </isoform>
    <isoform>
        <id>P98194-7</id>
        <name>7</name>
        <sequence type="described" ref="VSP_045892 VSP_000410"/>
    </isoform>
    <isoform>
        <id>P98194-8</id>
        <name>8</name>
        <sequence type="described" ref="VSP_045892 VSP_055036 VSP_055037"/>
    </isoform>
    <isoform>
        <id>P98194-9</id>
        <name>9</name>
        <name evidence="19">ATP2C1D</name>
        <sequence type="described" ref="VSP_055037"/>
    </isoform>
    <text>Isoform 1 and isoform 2 are expressed in the same tissues.</text>
</comment>
<comment type="tissue specificity">
    <text evidence="9 10">Found in most tissues except colon, thymus, spleen and leukocytes (PubMed:15831496). Expressed in keratinocytes (at protein level) (PubMed:14632183, PubMed:15831496).</text>
</comment>
<comment type="disease" evidence="4 5 6 7 8 14 15">
    <disease id="DI-01693">
        <name>Hailey-Hailey disease</name>
        <acronym>HHD</acronym>
        <description>An autosomal dominant cutaneous disorder characterized by erythema, skin blisters and erosions, and suprabasal acantholysis. Blisters and erosions most often affect the neck, armpits, skin folds, groin and genitals.</description>
        <dbReference type="MIM" id="169600"/>
    </disease>
    <text>The disease is caused by variants affecting the gene represented in this entry.</text>
</comment>
<comment type="similarity">
    <text evidence="22">Belongs to the cation transport ATPase (P-type) (TC 3.A.3) family. Type IIA subfamily.</text>
</comment>
<comment type="sequence caution" evidence="22">
    <conflict type="frameshift">
        <sequence resource="EMBL-CDS" id="BAA92585"/>
    </conflict>
</comment>
<comment type="sequence caution" evidence="22">
    <conflict type="erroneous initiation">
        <sequence resource="EMBL-CDS" id="BAC11142"/>
    </conflict>
</comment>
<proteinExistence type="evidence at protein level"/>
<reference key="1">
    <citation type="journal article" date="2000" name="Nat. Genet.">
        <title>Mutations in ATP2C1, encoding a calcium pump, cause Hailey-Hailey disease.</title>
        <authorList>
            <person name="Hu Z."/>
            <person name="Bonifas J.M."/>
            <person name="Beech J."/>
            <person name="Bench G."/>
            <person name="Shigihara T."/>
            <person name="Ogawa H."/>
            <person name="Ikeda S."/>
            <person name="Mauro T."/>
            <person name="Epstein E.H. Jr."/>
        </authorList>
    </citation>
    <scope>NUCLEOTIDE SEQUENCE [MRNA] (ISOFORMS 1 AND 2)</scope>
    <scope>FUNCTION</scope>
    <scope>VARIANTS HHD THR-304; PRO-318; ARG-641; ARG-645; MET-709 AND ARG-744</scope>
</reference>
<reference key="2">
    <citation type="journal article" date="2000" name="Hum. Mol. Genet.">
        <title>Hailey-Hailey disease is caused by mutations in ATP2C1 encoding a novel Ca(2+) pump.</title>
        <authorList>
            <person name="Sudbrak R."/>
            <person name="Brown J."/>
            <person name="Dobson-Stone C."/>
            <person name="Carter S."/>
            <person name="Ramser J."/>
            <person name="White J."/>
            <person name="Healy E."/>
            <person name="Dissanayake M."/>
            <person name="Larregue M."/>
            <person name="Perrussel M."/>
            <person name="Lehrach H."/>
            <person name="Munro C.S."/>
            <person name="Strachan T."/>
            <person name="Burge S."/>
            <person name="Hovnanian A."/>
            <person name="Monaco A.P."/>
        </authorList>
    </citation>
    <scope>NUCLEOTIDE SEQUENCE [MRNA] (ISOFORMS 3 AND 4)</scope>
    <scope>VARIANTS HHD LEU-201; TYR-344 AND ILE-570</scope>
    <source>
        <tissue>Keratinocyte</tissue>
    </source>
</reference>
<reference key="3">
    <citation type="journal article" date="2003" name="J. Biol. Chem.">
        <title>Effect of Hailey-Hailey Disease mutations on the function of a new variant of human secretory pathway Ca2+/Mn2+-ATPase (hSPCA1).</title>
        <authorList>
            <person name="Fairclough R.J."/>
            <person name="Dode L."/>
            <person name="Vanoevelen J."/>
            <person name="Andersen J.P."/>
            <person name="Missiaen L."/>
            <person name="Raeymaekers L."/>
            <person name="Wuytack F."/>
            <person name="Hovnanian A."/>
        </authorList>
    </citation>
    <scope>NUCLEOTIDE SEQUENCE [MRNA] (ISOFORMS 5 AND 9)</scope>
    <scope>FUNCTION</scope>
    <scope>SUBCELLULAR LOCATION</scope>
    <scope>CATALYTIC ACTIVITY</scope>
    <scope>CHARACTERIZATION OF VARIANTS HHD LEU-201; CYS-309; PRO-341; TYR-344; ARG-411; ILE-570; VAL-580; TYR-742 AND ARG-789</scope>
    <source>
        <tissue>Keratinocyte</tissue>
    </source>
</reference>
<reference key="4">
    <citation type="journal article" date="2000" name="DNA Res.">
        <title>Prediction of the coding sequences of unidentified human genes. XVI. The complete sequences of 150 new cDNA clones from brain which code for large proteins in vitro.</title>
        <authorList>
            <person name="Nagase T."/>
            <person name="Kikuno R."/>
            <person name="Ishikawa K."/>
            <person name="Hirosawa M."/>
            <person name="Ohara O."/>
        </authorList>
    </citation>
    <scope>NUCLEOTIDE SEQUENCE [LARGE SCALE MRNA] (ISOFORM 1)</scope>
    <source>
        <tissue>Brain</tissue>
    </source>
</reference>
<reference key="5">
    <citation type="journal article" date="2004" name="Nat. Genet.">
        <title>Complete sequencing and characterization of 21,243 full-length human cDNAs.</title>
        <authorList>
            <person name="Ota T."/>
            <person name="Suzuki Y."/>
            <person name="Nishikawa T."/>
            <person name="Otsuki T."/>
            <person name="Sugiyama T."/>
            <person name="Irie R."/>
            <person name="Wakamatsu A."/>
            <person name="Hayashi K."/>
            <person name="Sato H."/>
            <person name="Nagai K."/>
            <person name="Kimura K."/>
            <person name="Makita H."/>
            <person name="Sekine M."/>
            <person name="Obayashi M."/>
            <person name="Nishi T."/>
            <person name="Shibahara T."/>
            <person name="Tanaka T."/>
            <person name="Ishii S."/>
            <person name="Yamamoto J."/>
            <person name="Saito K."/>
            <person name="Kawai Y."/>
            <person name="Isono Y."/>
            <person name="Nakamura Y."/>
            <person name="Nagahari K."/>
            <person name="Murakami K."/>
            <person name="Yasuda T."/>
            <person name="Iwayanagi T."/>
            <person name="Wagatsuma M."/>
            <person name="Shiratori A."/>
            <person name="Sudo H."/>
            <person name="Hosoiri T."/>
            <person name="Kaku Y."/>
            <person name="Kodaira H."/>
            <person name="Kondo H."/>
            <person name="Sugawara M."/>
            <person name="Takahashi M."/>
            <person name="Kanda K."/>
            <person name="Yokoi T."/>
            <person name="Furuya T."/>
            <person name="Kikkawa E."/>
            <person name="Omura Y."/>
            <person name="Abe K."/>
            <person name="Kamihara K."/>
            <person name="Katsuta N."/>
            <person name="Sato K."/>
            <person name="Tanikawa M."/>
            <person name="Yamazaki M."/>
            <person name="Ninomiya K."/>
            <person name="Ishibashi T."/>
            <person name="Yamashita H."/>
            <person name="Murakawa K."/>
            <person name="Fujimori K."/>
            <person name="Tanai H."/>
            <person name="Kimata M."/>
            <person name="Watanabe M."/>
            <person name="Hiraoka S."/>
            <person name="Chiba Y."/>
            <person name="Ishida S."/>
            <person name="Ono Y."/>
            <person name="Takiguchi S."/>
            <person name="Watanabe S."/>
            <person name="Yosida M."/>
            <person name="Hotuta T."/>
            <person name="Kusano J."/>
            <person name="Kanehori K."/>
            <person name="Takahashi-Fujii A."/>
            <person name="Hara H."/>
            <person name="Tanase T.-O."/>
            <person name="Nomura Y."/>
            <person name="Togiya S."/>
            <person name="Komai F."/>
            <person name="Hara R."/>
            <person name="Takeuchi K."/>
            <person name="Arita M."/>
            <person name="Imose N."/>
            <person name="Musashino K."/>
            <person name="Yuuki H."/>
            <person name="Oshima A."/>
            <person name="Sasaki N."/>
            <person name="Aotsuka S."/>
            <person name="Yoshikawa Y."/>
            <person name="Matsunawa H."/>
            <person name="Ichihara T."/>
            <person name="Shiohata N."/>
            <person name="Sano S."/>
            <person name="Moriya S."/>
            <person name="Momiyama H."/>
            <person name="Satoh N."/>
            <person name="Takami S."/>
            <person name="Terashima Y."/>
            <person name="Suzuki O."/>
            <person name="Nakagawa S."/>
            <person name="Senoh A."/>
            <person name="Mizoguchi H."/>
            <person name="Goto Y."/>
            <person name="Shimizu F."/>
            <person name="Wakebe H."/>
            <person name="Hishigaki H."/>
            <person name="Watanabe T."/>
            <person name="Sugiyama A."/>
            <person name="Takemoto M."/>
            <person name="Kawakami B."/>
            <person name="Yamazaki M."/>
            <person name="Watanabe K."/>
            <person name="Kumagai A."/>
            <person name="Itakura S."/>
            <person name="Fukuzumi Y."/>
            <person name="Fujimori Y."/>
            <person name="Komiyama M."/>
            <person name="Tashiro H."/>
            <person name="Tanigami A."/>
            <person name="Fujiwara T."/>
            <person name="Ono T."/>
            <person name="Yamada K."/>
            <person name="Fujii Y."/>
            <person name="Ozaki K."/>
            <person name="Hirao M."/>
            <person name="Ohmori Y."/>
            <person name="Kawabata A."/>
            <person name="Hikiji T."/>
            <person name="Kobatake N."/>
            <person name="Inagaki H."/>
            <person name="Ikema Y."/>
            <person name="Okamoto S."/>
            <person name="Okitani R."/>
            <person name="Kawakami T."/>
            <person name="Noguchi S."/>
            <person name="Itoh T."/>
            <person name="Shigeta K."/>
            <person name="Senba T."/>
            <person name="Matsumura K."/>
            <person name="Nakajima Y."/>
            <person name="Mizuno T."/>
            <person name="Morinaga M."/>
            <person name="Sasaki M."/>
            <person name="Togashi T."/>
            <person name="Oyama M."/>
            <person name="Hata H."/>
            <person name="Watanabe M."/>
            <person name="Komatsu T."/>
            <person name="Mizushima-Sugano J."/>
            <person name="Satoh T."/>
            <person name="Shirai Y."/>
            <person name="Takahashi Y."/>
            <person name="Nakagawa K."/>
            <person name="Okumura K."/>
            <person name="Nagase T."/>
            <person name="Nomura N."/>
            <person name="Kikuchi H."/>
            <person name="Masuho Y."/>
            <person name="Yamashita R."/>
            <person name="Nakai K."/>
            <person name="Yada T."/>
            <person name="Nakamura Y."/>
            <person name="Ohara O."/>
            <person name="Isogai T."/>
            <person name="Sugano S."/>
        </authorList>
    </citation>
    <scope>NUCLEOTIDE SEQUENCE [LARGE SCALE MRNA] (ISOFORMS 1; 6; 7 AND 8)</scope>
    <scope>NUCLEOTIDE SEQUENCE [LARGE SCALE MRNA] OF 360-919 (ISOFORM 1)</scope>
    <source>
        <tissue>Mammary gland</tissue>
        <tissue>Neuron</tissue>
        <tissue>Thalamus</tissue>
    </source>
</reference>
<reference key="6">
    <citation type="journal article" date="2006" name="Nature">
        <title>The DNA sequence, annotation and analysis of human chromosome 3.</title>
        <authorList>
            <person name="Muzny D.M."/>
            <person name="Scherer S.E."/>
            <person name="Kaul R."/>
            <person name="Wang J."/>
            <person name="Yu J."/>
            <person name="Sudbrak R."/>
            <person name="Buhay C.J."/>
            <person name="Chen R."/>
            <person name="Cree A."/>
            <person name="Ding Y."/>
            <person name="Dugan-Rocha S."/>
            <person name="Gill R."/>
            <person name="Gunaratne P."/>
            <person name="Harris R.A."/>
            <person name="Hawes A.C."/>
            <person name="Hernandez J."/>
            <person name="Hodgson A.V."/>
            <person name="Hume J."/>
            <person name="Jackson A."/>
            <person name="Khan Z.M."/>
            <person name="Kovar-Smith C."/>
            <person name="Lewis L.R."/>
            <person name="Lozado R.J."/>
            <person name="Metzker M.L."/>
            <person name="Milosavljevic A."/>
            <person name="Miner G.R."/>
            <person name="Morgan M.B."/>
            <person name="Nazareth L.V."/>
            <person name="Scott G."/>
            <person name="Sodergren E."/>
            <person name="Song X.-Z."/>
            <person name="Steffen D."/>
            <person name="Wei S."/>
            <person name="Wheeler D.A."/>
            <person name="Wright M.W."/>
            <person name="Worley K.C."/>
            <person name="Yuan Y."/>
            <person name="Zhang Z."/>
            <person name="Adams C.Q."/>
            <person name="Ansari-Lari M.A."/>
            <person name="Ayele M."/>
            <person name="Brown M.J."/>
            <person name="Chen G."/>
            <person name="Chen Z."/>
            <person name="Clendenning J."/>
            <person name="Clerc-Blankenburg K.P."/>
            <person name="Chen R."/>
            <person name="Chen Z."/>
            <person name="Davis C."/>
            <person name="Delgado O."/>
            <person name="Dinh H.H."/>
            <person name="Dong W."/>
            <person name="Draper H."/>
            <person name="Ernst S."/>
            <person name="Fu G."/>
            <person name="Gonzalez-Garay M.L."/>
            <person name="Garcia D.K."/>
            <person name="Gillett W."/>
            <person name="Gu J."/>
            <person name="Hao B."/>
            <person name="Haugen E."/>
            <person name="Havlak P."/>
            <person name="He X."/>
            <person name="Hennig S."/>
            <person name="Hu S."/>
            <person name="Huang W."/>
            <person name="Jackson L.R."/>
            <person name="Jacob L.S."/>
            <person name="Kelly S.H."/>
            <person name="Kube M."/>
            <person name="Levy R."/>
            <person name="Li Z."/>
            <person name="Liu B."/>
            <person name="Liu J."/>
            <person name="Liu W."/>
            <person name="Lu J."/>
            <person name="Maheshwari M."/>
            <person name="Nguyen B.-V."/>
            <person name="Okwuonu G.O."/>
            <person name="Palmeiri A."/>
            <person name="Pasternak S."/>
            <person name="Perez L.M."/>
            <person name="Phelps K.A."/>
            <person name="Plopper F.J."/>
            <person name="Qiang B."/>
            <person name="Raymond C."/>
            <person name="Rodriguez R."/>
            <person name="Saenphimmachak C."/>
            <person name="Santibanez J."/>
            <person name="Shen H."/>
            <person name="Shen Y."/>
            <person name="Subramanian S."/>
            <person name="Tabor P.E."/>
            <person name="Verduzco D."/>
            <person name="Waldron L."/>
            <person name="Wang J."/>
            <person name="Wang J."/>
            <person name="Wang Q."/>
            <person name="Williams G.A."/>
            <person name="Wong G.K.-S."/>
            <person name="Yao Z."/>
            <person name="Zhang J."/>
            <person name="Zhang X."/>
            <person name="Zhao G."/>
            <person name="Zhou J."/>
            <person name="Zhou Y."/>
            <person name="Nelson D."/>
            <person name="Lehrach H."/>
            <person name="Reinhardt R."/>
            <person name="Naylor S.L."/>
            <person name="Yang H."/>
            <person name="Olson M."/>
            <person name="Weinstock G."/>
            <person name="Gibbs R.A."/>
        </authorList>
    </citation>
    <scope>NUCLEOTIDE SEQUENCE [LARGE SCALE GENOMIC DNA]</scope>
</reference>
<reference key="7">
    <citation type="submission" date="2005-09" db="EMBL/GenBank/DDBJ databases">
        <authorList>
            <person name="Mural R.J."/>
            <person name="Istrail S."/>
            <person name="Sutton G.G."/>
            <person name="Florea L."/>
            <person name="Halpern A.L."/>
            <person name="Mobarry C.M."/>
            <person name="Lippert R."/>
            <person name="Walenz B."/>
            <person name="Shatkay H."/>
            <person name="Dew I."/>
            <person name="Miller J.R."/>
            <person name="Flanigan M.J."/>
            <person name="Edwards N.J."/>
            <person name="Bolanos R."/>
            <person name="Fasulo D."/>
            <person name="Halldorsson B.V."/>
            <person name="Hannenhalli S."/>
            <person name="Turner R."/>
            <person name="Yooseph S."/>
            <person name="Lu F."/>
            <person name="Nusskern D.R."/>
            <person name="Shue B.C."/>
            <person name="Zheng X.H."/>
            <person name="Zhong F."/>
            <person name="Delcher A.L."/>
            <person name="Huson D.H."/>
            <person name="Kravitz S.A."/>
            <person name="Mouchard L."/>
            <person name="Reinert K."/>
            <person name="Remington K.A."/>
            <person name="Clark A.G."/>
            <person name="Waterman M.S."/>
            <person name="Eichler E.E."/>
            <person name="Adams M.D."/>
            <person name="Hunkapiller M.W."/>
            <person name="Myers E.W."/>
            <person name="Venter J.C."/>
        </authorList>
    </citation>
    <scope>NUCLEOTIDE SEQUENCE [LARGE SCALE GENOMIC DNA]</scope>
</reference>
<reference key="8">
    <citation type="journal article" date="2004" name="Genome Res.">
        <title>The status, quality, and expansion of the NIH full-length cDNA project: the Mammalian Gene Collection (MGC).</title>
        <authorList>
            <consortium name="The MGC Project Team"/>
        </authorList>
    </citation>
    <scope>NUCLEOTIDE SEQUENCE [LARGE SCALE MRNA] (ISOFORM 2)</scope>
    <source>
        <tissue>Blood</tissue>
    </source>
</reference>
<reference key="9">
    <citation type="journal article" date="2001" name="Yeast">
        <title>Characterization of 16 novel human genes showing high similarity to yeast sequences.</title>
        <authorList>
            <person name="Stanchi F."/>
            <person name="Bertocco E."/>
            <person name="Toppo S."/>
            <person name="Dioguardi R."/>
            <person name="Simionati B."/>
            <person name="Cannata N."/>
            <person name="Zimbello R."/>
            <person name="Lanfranchi G."/>
            <person name="Valle G."/>
        </authorList>
    </citation>
    <scope>NUCLEOTIDE SEQUENCE [MRNA] OF 424-919</scope>
</reference>
<reference key="10">
    <citation type="journal article" date="2003" name="J. Invest. Dermatol.">
        <title>Human keratinocyte ATP2C1 localizes to the Golgi and controls Golgi Ca2+ stores.</title>
        <authorList>
            <person name="Behne M.J."/>
            <person name="Tu C.L."/>
            <person name="Aronchik I."/>
            <person name="Epstein E."/>
            <person name="Bench G."/>
            <person name="Bikle D.D."/>
            <person name="Pozzan T."/>
            <person name="Mauro T.M."/>
        </authorList>
    </citation>
    <scope>FUNCTION</scope>
    <scope>SUBCELLULAR LOCATION</scope>
    <scope>TISSUE SPECIFICITY</scope>
</reference>
<reference key="11">
    <citation type="journal article" date="2005" name="J. Biol. Chem.">
        <title>The secretory pathway Ca2+/Mn2+-ATPase 2 is a Golgi-localized pump with high affinity for Ca2+ ions.</title>
        <authorList>
            <person name="Vanoevelen J."/>
            <person name="Dode L."/>
            <person name="Van Baelen K."/>
            <person name="Fairclough R.J."/>
            <person name="Missiaen L."/>
            <person name="Raeymaekers L."/>
            <person name="Wuytack F."/>
        </authorList>
    </citation>
    <scope>TISSUE SPECIFICITY</scope>
</reference>
<reference key="12">
    <citation type="journal article" date="2005" name="J. Biol. Chem.">
        <title>Functional comparison between secretory pathway Ca2+/Mn2+-ATPase (SPCA) 1 and sarcoplasmic reticulum Ca2+-ATPase (SERCA) 1 isoforms by steady-state and transient kinetic analyses.</title>
        <authorList>
            <person name="Dode L."/>
            <person name="Andersen J.P."/>
            <person name="Raeymaekers L."/>
            <person name="Missiaen L."/>
            <person name="Vilsen B."/>
            <person name="Wuytack F."/>
        </authorList>
    </citation>
    <scope>FUNCTION</scope>
    <scope>CATALYTIC ACTIVITY</scope>
</reference>
<reference key="13">
    <citation type="journal article" date="2006" name="J. Biol. Chem.">
        <title>Dissection of the functional differences between human secretory pathway Ca2+/Mn2+-ATPase (SPCA) 1 and 2 isoenzymes by steady-state and transient kinetic analyses.</title>
        <authorList>
            <person name="Dode L."/>
            <person name="Andersen J.P."/>
            <person name="Vanoevelen J."/>
            <person name="Raeymaekers L."/>
            <person name="Missiaen L."/>
            <person name="Vilsen B."/>
            <person name="Wuytack F."/>
        </authorList>
    </citation>
    <scope>FUNCTION</scope>
</reference>
<reference key="14">
    <citation type="journal article" date="2008" name="Proc. Natl. Acad. Sci. U.S.A.">
        <title>A quantitative atlas of mitotic phosphorylation.</title>
        <authorList>
            <person name="Dephoure N."/>
            <person name="Zhou C."/>
            <person name="Villen J."/>
            <person name="Beausoleil S.A."/>
            <person name="Bakalarski C.E."/>
            <person name="Elledge S.J."/>
            <person name="Gygi S.P."/>
        </authorList>
    </citation>
    <scope>IDENTIFICATION BY MASS SPECTROMETRY [LARGE SCALE ANALYSIS]</scope>
    <source>
        <tissue>Cervix carcinoma</tissue>
    </source>
</reference>
<reference key="15">
    <citation type="journal article" date="2010" name="Proc. Natl. Acad. Sci. U.S.A.">
        <title>Unique characteristics of Ca2+ homeostasis of the trans-Golgi compartment.</title>
        <authorList>
            <person name="Lissandron V."/>
            <person name="Podini P."/>
            <person name="Pizzo P."/>
            <person name="Pozzan T."/>
        </authorList>
    </citation>
    <scope>FUNCTION</scope>
</reference>
<reference key="16">
    <citation type="journal article" date="2011" name="BMC Syst. Biol.">
        <title>Initial characterization of the human central proteome.</title>
        <authorList>
            <person name="Burkard T.R."/>
            <person name="Planyavsky M."/>
            <person name="Kaupe I."/>
            <person name="Breitwieser F.P."/>
            <person name="Buerckstuemmer T."/>
            <person name="Bennett K.L."/>
            <person name="Superti-Furga G."/>
            <person name="Colinge J."/>
        </authorList>
    </citation>
    <scope>IDENTIFICATION BY MASS SPECTROMETRY [LARGE SCALE ANALYSIS]</scope>
</reference>
<reference key="17">
    <citation type="journal article" date="2011" name="Proc. Natl. Acad. Sci. U.S.A.">
        <title>Identification of a gain-of-function mutation in a Golgi P-type ATPase that enhances Mn2+ efflux and protects against toxicity.</title>
        <authorList>
            <person name="Mukhopadhyay S."/>
            <person name="Linstedt A.D."/>
        </authorList>
    </citation>
    <scope>FUNCTION</scope>
    <scope>CATALYTIC ACTIVITY</scope>
    <scope>SUBCELLULAR LOCATION</scope>
    <scope>MUTAGENESIS OF ASP-350 AND GLN-747</scope>
    <scope>CHARACTERIZATION OF VARIANT HHD CYS-309</scope>
</reference>
<reference key="18">
    <citation type="journal article" date="2013" name="J. Proteome Res.">
        <title>Toward a comprehensive characterization of a human cancer cell phosphoproteome.</title>
        <authorList>
            <person name="Zhou H."/>
            <person name="Di Palma S."/>
            <person name="Preisinger C."/>
            <person name="Peng M."/>
            <person name="Polat A.N."/>
            <person name="Heck A.J."/>
            <person name="Mohammed S."/>
        </authorList>
    </citation>
    <scope>IDENTIFICATION BY MASS SPECTROMETRY [LARGE SCALE ANALYSIS]</scope>
    <source>
        <tissue>Cervix carcinoma</tissue>
        <tissue>Erythroleukemia</tissue>
    </source>
</reference>
<reference key="19">
    <citation type="journal article" date="2019" name="J. Biol. Chem.">
        <title>An N-terminal Ca2+-binding motif regulates the secretory pathway Ca2+/Mn2+-transport ATPase SPCA1.</title>
        <authorList>
            <person name="Chen J."/>
            <person name="Smaardijk S."/>
            <person name="Mattelaer C.A."/>
            <person name="Pamula F."/>
            <person name="Vandecaetsbeek I."/>
            <person name="Vanoevelen J."/>
            <person name="Wuytack F."/>
            <person name="Lescrinier E."/>
            <person name="Eggermont J."/>
            <person name="Vangheluwe P."/>
        </authorList>
    </citation>
    <scope>FUNCTION</scope>
    <scope>CATALYTIC ACTIVITY</scope>
    <scope>BIOPHYSICOCHEMICAL PROPERTIES</scope>
    <scope>SUBUNIT</scope>
    <scope>MUTAGENESIS OF GLN-39; ASP-41 AND GLU-50</scope>
</reference>
<reference key="20">
    <citation type="journal article" date="2002" name="J. Invest. Dermatol.">
        <title>Hailey-Hailey disease: molecular and clinical characterization of novel mutations in the ATP2C1 gene.</title>
        <authorList>
            <person name="Dobson-Stone C."/>
            <person name="Fairclough R."/>
            <person name="Dunne E."/>
            <person name="Brown J."/>
            <person name="Dissanayake M."/>
            <person name="Munro C.S."/>
            <person name="Strachan T."/>
            <person name="Burge S."/>
            <person name="Sudbrak R."/>
            <person name="Monaco A.P."/>
            <person name="Hovnanian A."/>
        </authorList>
    </citation>
    <scope>VARIANTS HHD CYS-309; PRO-341; ARG-411; VAL-580; TYR-742 AND ARG-789</scope>
</reference>
<reference key="21">
    <citation type="journal article" date="2002" name="J. Invest. Dermatol.">
        <title>Analysis of ATP2C1 gene mutation in 10 unrelated Japanese families with Hailey-Hailey disease.</title>
        <authorList>
            <person name="Yokota K."/>
            <person name="Yasukawa K."/>
            <person name="Shimizu H."/>
        </authorList>
    </citation>
    <scope>VARIANTS HHD PHE-490 AND PRO-584</scope>
</reference>
<reference key="22">
    <citation type="journal article" date="2017" name="Hum. Mutat.">
        <title>Mendelian Disorders of Cornification Caused by Defects in Intracellular Calcium Pumps: Mutation Update and Database for Variants in ATP2A2 and ATP2C1 associated with Darier disease and Hailey-Hailey disease.</title>
        <authorList>
            <consortium name="European Professional Contributors"/>
            <person name="Nellen R.G."/>
            <person name="Steijlen P.M."/>
            <person name="van Steensel M.A."/>
            <person name="Vreeburg M."/>
            <person name="Frank J."/>
            <person name="van Geel M."/>
        </authorList>
    </citation>
    <scope>VARIANTS HHD GLU-220; VAL-309; 609-GLN--VAL-919 DEL; 730-ASN-ALA-731 DEL AND ASP-731</scope>
</reference>
<organism>
    <name type="scientific">Homo sapiens</name>
    <name type="common">Human</name>
    <dbReference type="NCBI Taxonomy" id="9606"/>
    <lineage>
        <taxon>Eukaryota</taxon>
        <taxon>Metazoa</taxon>
        <taxon>Chordata</taxon>
        <taxon>Craniata</taxon>
        <taxon>Vertebrata</taxon>
        <taxon>Euteleostomi</taxon>
        <taxon>Mammalia</taxon>
        <taxon>Eutheria</taxon>
        <taxon>Euarchontoglires</taxon>
        <taxon>Primates</taxon>
        <taxon>Haplorrhini</taxon>
        <taxon>Catarrhini</taxon>
        <taxon>Hominidae</taxon>
        <taxon>Homo</taxon>
    </lineage>
</organism>
<protein>
    <recommendedName>
        <fullName>Calcium-transporting ATPase type 2C member 1</fullName>
        <shortName evidence="19">ATPase 2C1</shortName>
        <ecNumber evidence="11 16">7.2.2.10</ecNumber>
    </recommendedName>
    <alternativeName>
        <fullName>ATP-dependent Ca(2+) pump PMR1</fullName>
    </alternativeName>
    <alternativeName>
        <fullName evidence="19">Ca(2+)/Mn(2+)-ATPase 2C1</fullName>
    </alternativeName>
    <alternativeName>
        <fullName>Secretory pathway Ca(2+)-transporting ATPase type 1</fullName>
        <shortName evidence="19">SPCA1</shortName>
    </alternativeName>
</protein>
<accession>P98194</accession>
<accession>B2RAT7</accession>
<accession>B4DSW3</accession>
<accession>B7Z3X9</accession>
<accession>G3XAH8</accession>
<accession>G8JLN9</accession>
<accession>O76005</accession>
<accession>Q86V72</accession>
<accession>Q86V73</accession>
<accession>Q8N6V1</accession>
<accession>Q8NCJ7</accession>
<gene>
    <name evidence="17 26" type="primary">ATP2C1</name>
    <name type="synonym">KIAA1347</name>
    <name type="synonym">PMR1L</name>
    <name type="ORF">HUSSY-28</name>
</gene>
<evidence type="ECO:0000250" key="1"/>
<evidence type="ECO:0000250" key="2">
    <source>
        <dbReference type="UniProtKB" id="Q80XR2"/>
    </source>
</evidence>
<evidence type="ECO:0000255" key="3"/>
<evidence type="ECO:0000269" key="4">
    <source>
    </source>
</evidence>
<evidence type="ECO:0000269" key="5">
    <source>
    </source>
</evidence>
<evidence type="ECO:0000269" key="6">
    <source>
    </source>
</evidence>
<evidence type="ECO:0000269" key="7">
    <source>
    </source>
</evidence>
<evidence type="ECO:0000269" key="8">
    <source>
    </source>
</evidence>
<evidence type="ECO:0000269" key="9">
    <source>
    </source>
</evidence>
<evidence type="ECO:0000269" key="10">
    <source>
    </source>
</evidence>
<evidence type="ECO:0000269" key="11">
    <source>
    </source>
</evidence>
<evidence type="ECO:0000269" key="12">
    <source>
    </source>
</evidence>
<evidence type="ECO:0000269" key="13">
    <source>
    </source>
</evidence>
<evidence type="ECO:0000269" key="14">
    <source>
    </source>
</evidence>
<evidence type="ECO:0000269" key="15">
    <source>
    </source>
</evidence>
<evidence type="ECO:0000269" key="16">
    <source>
    </source>
</evidence>
<evidence type="ECO:0000303" key="17">
    <source>
    </source>
</evidence>
<evidence type="ECO:0000303" key="18">
    <source>
    </source>
</evidence>
<evidence type="ECO:0000303" key="19">
    <source>
    </source>
</evidence>
<evidence type="ECO:0000303" key="20">
    <source>
    </source>
</evidence>
<evidence type="ECO:0000303" key="21">
    <source>
    </source>
</evidence>
<evidence type="ECO:0000305" key="22"/>
<evidence type="ECO:0000305" key="23">
    <source>
    </source>
</evidence>
<evidence type="ECO:0000305" key="24">
    <source>
    </source>
</evidence>
<evidence type="ECO:0000305" key="25">
    <source>
    </source>
</evidence>
<evidence type="ECO:0000312" key="26">
    <source>
        <dbReference type="HGNC" id="HGNC:13211"/>
    </source>
</evidence>
<evidence type="ECO:0007829" key="27">
    <source>
        <dbReference type="PDB" id="7YAG"/>
    </source>
</evidence>
<evidence type="ECO:0007829" key="28">
    <source>
        <dbReference type="PDB" id="7YAH"/>
    </source>
</evidence>
<evidence type="ECO:0007829" key="29">
    <source>
        <dbReference type="PDB" id="7YAI"/>
    </source>
</evidence>
<evidence type="ECO:0007829" key="30">
    <source>
        <dbReference type="PDB" id="7YAM"/>
    </source>
</evidence>
<sequence>MKVARFQKIPNGENETMIPVLTSKKASELPVSEVASILQADLQNGLNKCEVSHRRAFHGWNEFDISEDEPLWKKYISQFKNPLIMLLLASAVISVLMHQFDDAVSITVAILIVVTVAFVQEYRSEKSLEELSKLVPPECHCVREGKLEHTLARDLVPGDTVCLSVGDRVPADLRLFEAVDLSIDESSLTGETTPCSKVTAPQPAATNGDLASRSNIAFMGTLVRCGKAKGVVIGTGENSEFGEVFKMMQAEEAPKTPLQKSMDLLGKQLSFYSFGIIGIIMLVGWLLGKDILEMFTISVSLAVAAIPEGLPIVVTVTLALGVMRMVKKRAIVKKLPIVETLGCCNVICSDKTGTLTKNEMTVTHIFTSDGLHAEVTGVGYNQFGEVIVDGDVVHGFYNPAVSRIVEAGCVCNDAVIRNNTLMGKPTEGALIALAMKMGLDGLQQDYIRKAEYPFSSEQKWMAVKCVHRTQQDRPEICFMKGAYEQVIKYCTTYQSKGQTLTLTQQQRDVYQQEKARMGSAGLRVLALASGPELGQLTFLGLVGIIDPPRTGVKEAVTTLIASGVSIKMITGDSQETAVAIASRLGLYSKTSQSVSGEEIDAMDVQQLSQIVPKVAVFYRASPRHKMKIIKSLQKNGSVVAMTGDGVNDAVALKAADIGVAMGQTGTDVCKEAADMILVDDDFQTIMSAIEEGKGIYNNIKNFVRFQLSTSIAALTLISLATLMNFPNPLNAMQILWINIIMDGPPAQSLGVEPVDKDVIRKPPRNWKDSILTKNLILKILVSSIIIVCGTLFVFWRELRDNVITPRDTTMTFTCFVFFDMFNALSSRSQTKSVFEIGLCSNRMFCYAVLGSIMGQLLVIYFPPLQKVFQTESLSILDLLFLLGLTSSVCIVAEIIKKVERSREKIQKHVSSTSSSFLEV</sequence>
<feature type="chain" id="PRO_0000046223" description="Calcium-transporting ATPase type 2C member 1">
    <location>
        <begin position="1"/>
        <end position="919"/>
    </location>
</feature>
<feature type="topological domain" description="Cytoplasmic" evidence="1">
    <location>
        <begin position="1"/>
        <end position="70"/>
    </location>
</feature>
<feature type="transmembrane region" description="Helical; Name=1" evidence="1">
    <location>
        <begin position="71"/>
        <end position="91"/>
    </location>
</feature>
<feature type="topological domain" description="Lumenal" evidence="1">
    <location>
        <begin position="92"/>
        <end position="104"/>
    </location>
</feature>
<feature type="transmembrane region" description="Helical; Name=2" evidence="1">
    <location>
        <begin position="105"/>
        <end position="123"/>
    </location>
</feature>
<feature type="topological domain" description="Cytoplasmic" evidence="1">
    <location>
        <begin position="124"/>
        <end position="262"/>
    </location>
</feature>
<feature type="transmembrane region" description="Helical; Name=3" evidence="1">
    <location>
        <begin position="263"/>
        <end position="282"/>
    </location>
</feature>
<feature type="topological domain" description="Lumenal" evidence="1">
    <location>
        <begin position="283"/>
        <end position="294"/>
    </location>
</feature>
<feature type="transmembrane region" description="Helical; Name=4" evidence="1">
    <location>
        <begin position="295"/>
        <end position="312"/>
    </location>
</feature>
<feature type="topological domain" description="Cytoplasmic" evidence="1">
    <location>
        <begin position="313"/>
        <end position="699"/>
    </location>
</feature>
<feature type="transmembrane region" description="Helical; Name=5" evidence="1">
    <location>
        <begin position="700"/>
        <end position="719"/>
    </location>
</feature>
<feature type="topological domain" description="Lumenal" evidence="1">
    <location>
        <begin position="720"/>
        <end position="729"/>
    </location>
</feature>
<feature type="transmembrane region" description="Helical; Name=6" evidence="1">
    <location>
        <begin position="730"/>
        <end position="750"/>
    </location>
</feature>
<feature type="topological domain" description="Cytoplasmic" evidence="1">
    <location>
        <begin position="751"/>
        <end position="770"/>
    </location>
</feature>
<feature type="transmembrane region" description="Helical; Name=7" evidence="1">
    <location>
        <begin position="771"/>
        <end position="793"/>
    </location>
</feature>
<feature type="topological domain" description="Lumenal" evidence="1">
    <location>
        <begin position="794"/>
        <end position="808"/>
    </location>
</feature>
<feature type="transmembrane region" description="Helical; Name=8" evidence="1">
    <location>
        <begin position="809"/>
        <end position="828"/>
    </location>
</feature>
<feature type="topological domain" description="Cytoplasmic" evidence="1">
    <location>
        <begin position="829"/>
        <end position="841"/>
    </location>
</feature>
<feature type="transmembrane region" description="Helical; Name=9" evidence="1">
    <location>
        <begin position="842"/>
        <end position="860"/>
    </location>
</feature>
<feature type="topological domain" description="Lumenal" evidence="1">
    <location>
        <begin position="861"/>
        <end position="875"/>
    </location>
</feature>
<feature type="transmembrane region" description="Helical; Name=10" evidence="1">
    <location>
        <begin position="876"/>
        <end position="896"/>
    </location>
</feature>
<feature type="topological domain" description="Cytoplasmic" evidence="1">
    <location>
        <begin position="897"/>
        <end position="919"/>
    </location>
</feature>
<feature type="active site" description="4-aspartylphosphate intermediate" evidence="1">
    <location>
        <position position="350"/>
    </location>
</feature>
<feature type="binding site" evidence="1">
    <location>
        <position position="303"/>
    </location>
    <ligand>
        <name>Ca(2+)</name>
        <dbReference type="ChEBI" id="CHEBI:29108"/>
        <label>2</label>
    </ligand>
</feature>
<feature type="binding site" evidence="1">
    <location>
        <position position="304"/>
    </location>
    <ligand>
        <name>Ca(2+)</name>
        <dbReference type="ChEBI" id="CHEBI:29108"/>
        <label>2</label>
    </ligand>
</feature>
<feature type="binding site" evidence="1">
    <location>
        <position position="306"/>
    </location>
    <ligand>
        <name>Ca(2+)</name>
        <dbReference type="ChEBI" id="CHEBI:29108"/>
        <label>2</label>
    </ligand>
</feature>
<feature type="binding site" evidence="1">
    <location>
        <position position="308"/>
    </location>
    <ligand>
        <name>Ca(2+)</name>
        <dbReference type="ChEBI" id="CHEBI:29108"/>
        <label>2</label>
    </ligand>
</feature>
<feature type="binding site" evidence="1">
    <location>
        <position position="644"/>
    </location>
    <ligand>
        <name>Mg(2+)</name>
        <dbReference type="ChEBI" id="CHEBI:18420"/>
    </ligand>
</feature>
<feature type="binding site" evidence="1">
    <location>
        <position position="648"/>
    </location>
    <ligand>
        <name>Mg(2+)</name>
        <dbReference type="ChEBI" id="CHEBI:18420"/>
    </ligand>
</feature>
<feature type="binding site" evidence="1">
    <location>
        <position position="738"/>
    </location>
    <ligand>
        <name>Ca(2+)</name>
        <dbReference type="ChEBI" id="CHEBI:29108"/>
        <label>2</label>
    </ligand>
</feature>
<feature type="binding site" evidence="1">
    <location>
        <position position="742"/>
    </location>
    <ligand>
        <name>Ca(2+)</name>
        <dbReference type="ChEBI" id="CHEBI:29108"/>
        <label>2</label>
    </ligand>
</feature>
<feature type="splice variant" id="VSP_000408" description="In isoform 3 and isoform 4." evidence="18">
    <location>
        <begin position="1"/>
        <end position="16"/>
    </location>
</feature>
<feature type="splice variant" id="VSP_045892" description="In isoform 7 and isoform 8." evidence="20">
    <original>MK</original>
    <variation>MDSLLPPSRFSYFKKYPLHAIRRYLSTLRNQRAEEQ</variation>
    <location>
        <begin position="1"/>
        <end position="2"/>
    </location>
</feature>
<feature type="splice variant" id="VSP_055036" description="In isoform 8." evidence="20">
    <location>
        <begin position="39"/>
        <end position="77"/>
    </location>
</feature>
<feature type="splice variant" id="VSP_000409" description="In isoform 2." evidence="17 21">
    <original>DLLFLLGLTSSVCIVAEIIKKVERSREKIQKHVSSTSSSFLEV</original>
    <variation>GLALGEEWTAAG</variation>
    <location>
        <begin position="877"/>
        <end position="919"/>
    </location>
</feature>
<feature type="splice variant" id="VSP_000410" description="In isoform 3, isoform 5 and isoform 7." evidence="18 19 20">
    <original>SSTSSSFLEV</original>
    <variation>WLWERSGQQLVEIHPHLETGLPLTEDVSCV</variation>
    <location>
        <begin position="910"/>
        <end position="919"/>
    </location>
</feature>
<feature type="splice variant" id="VSP_014102" description="In isoform 6." evidence="19 20">
    <original>V</original>
    <variation>VSSTSSSFLEVWLWERSGQQLVEIHPHLETGLPLTEDVSCV</variation>
    <location>
        <position position="919"/>
    </location>
</feature>
<feature type="splice variant" id="VSP_055037" description="In isoform 9 and isoform 8." evidence="20">
    <original>V</original>
    <variation>VWLWERSGQQLVEIHPHLETGLPLTEDVSCV</variation>
    <location>
        <position position="919"/>
    </location>
</feature>
<feature type="sequence variant" id="VAR_010130" description="In HHD; has normal catalytic cycle." evidence="5 8">
    <original>P</original>
    <variation>L</variation>
    <location>
        <position position="201"/>
    </location>
</feature>
<feature type="sequence variant" id="VAR_079698" description="In HHD." evidence="15">
    <original>G</original>
    <variation>E</variation>
    <location>
        <position position="220"/>
    </location>
</feature>
<feature type="sequence variant" id="VAR_008803" description="In HHD; dbSNP:rs137853012." evidence="4">
    <original>A</original>
    <variation>T</variation>
    <location>
        <position position="304"/>
    </location>
</feature>
<feature type="sequence variant" id="VAR_022672" description="In HHD; impairs manganese-dependent autophosphorylation in the presence of ATP; impairs manganese transporter activity." evidence="6 8 14">
    <original>G</original>
    <variation>C</variation>
    <location>
        <position position="309"/>
    </location>
</feature>
<feature type="sequence variant" id="VAR_079699" description="In HHD; dbSNP:rs1393570830." evidence="15">
    <original>G</original>
    <variation>V</variation>
    <location>
        <position position="309"/>
    </location>
</feature>
<feature type="sequence variant" id="VAR_008804" description="In HHD." evidence="4">
    <original>L</original>
    <variation>P</variation>
    <location>
        <position position="318"/>
    </location>
</feature>
<feature type="sequence variant" id="VAR_022673" description="In HHD; decreases protein expression." evidence="6 8">
    <original>L</original>
    <variation>P</variation>
    <location>
        <position position="341"/>
    </location>
</feature>
<feature type="sequence variant" id="VAR_010131" description="In HHD; decreases protein expression." evidence="5 8">
    <original>C</original>
    <variation>Y</variation>
    <location>
        <position position="344"/>
    </location>
</feature>
<feature type="sequence variant" id="VAR_022674" description="In HHD; decreases protein expression." evidence="6 8">
    <original>C</original>
    <variation>R</variation>
    <location>
        <position position="411"/>
    </location>
</feature>
<feature type="sequence variant" id="VAR_048373" description="In dbSNP:rs41434650.">
    <original>A</original>
    <variation>T</variation>
    <location>
        <position position="450"/>
    </location>
</feature>
<feature type="sequence variant" id="VAR_019523" description="In HHD; dbSNP:rs137853014." evidence="7">
    <original>C</original>
    <variation>F</variation>
    <location>
        <position position="490"/>
    </location>
</feature>
<feature type="sequence variant" id="VAR_010132" description="In HHD; decreases protein expression." evidence="5 8">
    <original>T</original>
    <variation>I</variation>
    <location>
        <position position="570"/>
    </location>
</feature>
<feature type="sequence variant" id="VAR_022675" description="In HHD; impairs phosphoenzyme dephosphorylation; dbSNP:rs1282232888." evidence="6 8">
    <original>I</original>
    <variation>V</variation>
    <location>
        <position position="580"/>
    </location>
</feature>
<feature type="sequence variant" id="VAR_019524" description="In HHD; dbSNP:rs137853015." evidence="7">
    <original>L</original>
    <variation>P</variation>
    <location>
        <position position="584"/>
    </location>
</feature>
<feature type="sequence variant" id="VAR_079700" description="In HHD." evidence="15">
    <location>
        <begin position="609"/>
        <end position="919"/>
    </location>
</feature>
<feature type="sequence variant" id="VAR_008805" description="In HHD." evidence="4">
    <original>M</original>
    <variation>R</variation>
    <location>
        <position position="641"/>
    </location>
</feature>
<feature type="sequence variant" id="VAR_008806" description="In HHD." evidence="4">
    <original>G</original>
    <variation>R</variation>
    <location>
        <position position="645"/>
    </location>
</feature>
<feature type="sequence variant" id="VAR_008807" description="In HHD; dbSNP:rs778865612." evidence="4">
    <original>T</original>
    <variation>M</variation>
    <location>
        <position position="709"/>
    </location>
</feature>
<feature type="sequence variant" id="VAR_079701" description="In HHD." evidence="15">
    <location>
        <begin position="730"/>
        <end position="731"/>
    </location>
</feature>
<feature type="sequence variant" id="VAR_079702" description="In HHD." evidence="15">
    <original>A</original>
    <variation>D</variation>
    <location>
        <position position="731"/>
    </location>
</feature>
<feature type="sequence variant" id="VAR_022676" description="In HHD; impairs calcium- and manganese-dependent autophosphorylation." evidence="6 8">
    <original>D</original>
    <variation>Y</variation>
    <location>
        <position position="742"/>
    </location>
</feature>
<feature type="sequence variant" id="VAR_008808" description="In HHD." evidence="4">
    <original>P</original>
    <variation>R</variation>
    <location>
        <position position="744"/>
    </location>
</feature>
<feature type="sequence variant" id="VAR_022677" description="In HHD; decreases protein expression." evidence="6 8">
    <original>G</original>
    <variation>R</variation>
    <location>
        <position position="789"/>
    </location>
</feature>
<feature type="mutagenesis site" description="Decreases calcium-dependent autophosphorylation." evidence="16">
    <original>Q</original>
    <variation>C</variation>
    <location>
        <position position="39"/>
    </location>
</feature>
<feature type="mutagenesis site" description="Decreases calcium-dependent autophosphorylation and the ATPase activity; when associated with A-50." evidence="16">
    <original>D</original>
    <variation>A</variation>
    <location>
        <position position="41"/>
    </location>
</feature>
<feature type="mutagenesis site" description="Decreases calcium-dependent autophosphorylation and the ATPase activity; when associated with A-41." evidence="16">
    <original>E</original>
    <variation>A</variation>
    <location>
        <position position="50"/>
    </location>
</feature>
<feature type="mutagenesis site" description="Decreases calcium-dependent autophosphorylation." evidence="16">
    <original>E</original>
    <variation>S</variation>
    <location>
        <position position="50"/>
    </location>
</feature>
<feature type="mutagenesis site" description="Impairs pump activity." evidence="14">
    <original>D</original>
    <variation>A</variation>
    <location>
        <position position="350"/>
    </location>
</feature>
<feature type="mutagenesis site" description="Increases manganese transporter activity." evidence="14">
    <original>Q</original>
    <variation>A</variation>
    <location>
        <position position="747"/>
    </location>
</feature>
<feature type="sequence conflict" description="In Ref. 1; AAF26295/AAF26296." evidence="22" ref="1">
    <original>E</original>
    <variation>K</variation>
    <location>
        <position position="62"/>
    </location>
</feature>
<feature type="sequence conflict" description="In Ref. 2; AAF35375." evidence="22" ref="2">
    <original>I</original>
    <variation>F</variation>
    <location>
        <position position="112"/>
    </location>
</feature>
<feature type="sequence conflict" description="In Ref. 5; BAC11142." evidence="22" ref="5">
    <original>T</original>
    <variation>I</variation>
    <location>
        <position position="150"/>
    </location>
</feature>
<feature type="sequence conflict" description="In Ref. 5; BAH12365." evidence="22" ref="5">
    <original>V</original>
    <variation>A</variation>
    <location>
        <position position="346"/>
    </location>
</feature>
<feature type="sequence conflict" description="In Ref. 1; AAF26295/AAF26296." evidence="22" ref="1">
    <original>A</original>
    <variation>T</variation>
    <location>
        <position position="373"/>
    </location>
</feature>
<feature type="sequence conflict" description="In Ref. 9; CAA09425." evidence="22" ref="9">
    <original>R</original>
    <variation>H</variation>
    <location>
        <position position="516"/>
    </location>
</feature>
<feature type="sequence conflict" description="In Ref. 5; BAC11142." evidence="22" ref="5">
    <original>A</original>
    <variation>T</variation>
    <location>
        <position position="713"/>
    </location>
</feature>
<feature type="sequence conflict" description="In Ref. 5; BAG61775." evidence="22" ref="5">
    <original>F</original>
    <variation>L</variation>
    <location>
        <position position="868"/>
    </location>
</feature>
<feature type="sequence conflict" description="In Ref. 5; BAC11142." evidence="22" ref="5">
    <original>S</original>
    <variation>G</variation>
    <location>
        <position position="901"/>
    </location>
</feature>
<feature type="helix" evidence="27">
    <location>
        <begin position="23"/>
        <end position="28"/>
    </location>
</feature>
<feature type="helix" evidence="27">
    <location>
        <begin position="31"/>
        <end position="38"/>
    </location>
</feature>
<feature type="turn" evidence="27">
    <location>
        <begin position="42"/>
        <end position="44"/>
    </location>
</feature>
<feature type="helix" evidence="27">
    <location>
        <begin position="48"/>
        <end position="58"/>
    </location>
</feature>
<feature type="helix" evidence="27">
    <location>
        <begin position="71"/>
        <end position="77"/>
    </location>
</feature>
<feature type="helix" evidence="27">
    <location>
        <begin position="78"/>
        <end position="80"/>
    </location>
</feature>
<feature type="helix" evidence="27">
    <location>
        <begin position="82"/>
        <end position="96"/>
    </location>
</feature>
<feature type="helix" evidence="27">
    <location>
        <begin position="100"/>
        <end position="133"/>
    </location>
</feature>
<feature type="strand" evidence="27">
    <location>
        <begin position="138"/>
        <end position="142"/>
    </location>
</feature>
<feature type="strand" evidence="27">
    <location>
        <begin position="144"/>
        <end position="151"/>
    </location>
</feature>
<feature type="helix" evidence="27">
    <location>
        <begin position="152"/>
        <end position="154"/>
    </location>
</feature>
<feature type="strand" evidence="27">
    <location>
        <begin position="160"/>
        <end position="163"/>
    </location>
</feature>
<feature type="strand" evidence="27">
    <location>
        <begin position="173"/>
        <end position="184"/>
    </location>
</feature>
<feature type="turn" evidence="27">
    <location>
        <begin position="186"/>
        <end position="189"/>
    </location>
</feature>
<feature type="strand" evidence="29">
    <location>
        <begin position="195"/>
        <end position="197"/>
    </location>
</feature>
<feature type="turn" evidence="30">
    <location>
        <begin position="210"/>
        <end position="212"/>
    </location>
</feature>
<feature type="strand" evidence="27">
    <location>
        <begin position="214"/>
        <end position="217"/>
    </location>
</feature>
<feature type="strand" evidence="27">
    <location>
        <begin position="222"/>
        <end position="232"/>
    </location>
</feature>
<feature type="helix" evidence="27">
    <location>
        <begin position="236"/>
        <end position="238"/>
    </location>
</feature>
<feature type="helix" evidence="27">
    <location>
        <begin position="242"/>
        <end position="249"/>
    </location>
</feature>
<feature type="helix" evidence="27">
    <location>
        <begin position="257"/>
        <end position="287"/>
    </location>
</feature>
<feature type="helix" evidence="27">
    <location>
        <begin position="291"/>
        <end position="305"/>
    </location>
</feature>
<feature type="helix" evidence="27">
    <location>
        <begin position="309"/>
        <end position="327"/>
    </location>
</feature>
<feature type="strand" evidence="27">
    <location>
        <begin position="330"/>
        <end position="332"/>
    </location>
</feature>
<feature type="helix" evidence="27">
    <location>
        <begin position="336"/>
        <end position="341"/>
    </location>
</feature>
<feature type="strand" evidence="27">
    <location>
        <begin position="344"/>
        <end position="350"/>
    </location>
</feature>
<feature type="turn" evidence="27">
    <location>
        <begin position="351"/>
        <end position="354"/>
    </location>
</feature>
<feature type="strand" evidence="27">
    <location>
        <begin position="361"/>
        <end position="367"/>
    </location>
</feature>
<feature type="strand" evidence="27">
    <location>
        <begin position="372"/>
        <end position="375"/>
    </location>
</feature>
<feature type="strand" evidence="27">
    <location>
        <begin position="379"/>
        <end position="382"/>
    </location>
</feature>
<feature type="strand" evidence="27">
    <location>
        <begin position="386"/>
        <end position="388"/>
    </location>
</feature>
<feature type="strand" evidence="28">
    <location>
        <begin position="391"/>
        <end position="393"/>
    </location>
</feature>
<feature type="helix" evidence="27">
    <location>
        <begin position="399"/>
        <end position="410"/>
    </location>
</feature>
<feature type="strand" evidence="27">
    <location>
        <begin position="416"/>
        <end position="419"/>
    </location>
</feature>
<feature type="strand" evidence="30">
    <location>
        <begin position="420"/>
        <end position="423"/>
    </location>
</feature>
<feature type="helix" evidence="27">
    <location>
        <begin position="425"/>
        <end position="437"/>
    </location>
</feature>
<feature type="helix" evidence="27">
    <location>
        <begin position="440"/>
        <end position="445"/>
    </location>
</feature>
<feature type="strand" evidence="27">
    <location>
        <begin position="446"/>
        <end position="452"/>
    </location>
</feature>
<feature type="turn" evidence="27">
    <location>
        <begin position="456"/>
        <end position="458"/>
    </location>
</feature>
<feature type="strand" evidence="27">
    <location>
        <begin position="460"/>
        <end position="469"/>
    </location>
</feature>
<feature type="strand" evidence="27">
    <location>
        <begin position="476"/>
        <end position="481"/>
    </location>
</feature>
<feature type="helix" evidence="27">
    <location>
        <begin position="483"/>
        <end position="489"/>
    </location>
</feature>
<feature type="strand" evidence="27">
    <location>
        <begin position="490"/>
        <end position="495"/>
    </location>
</feature>
<feature type="strand" evidence="27">
    <location>
        <begin position="498"/>
        <end position="501"/>
    </location>
</feature>
<feature type="helix" evidence="27">
    <location>
        <begin position="504"/>
        <end position="519"/>
    </location>
</feature>
<feature type="strand" evidence="27">
    <location>
        <begin position="522"/>
        <end position="532"/>
    </location>
</feature>
<feature type="strand" evidence="27">
    <location>
        <begin position="535"/>
        <end position="545"/>
    </location>
</feature>
<feature type="helix" evidence="27">
    <location>
        <begin position="552"/>
        <end position="561"/>
    </location>
</feature>
<feature type="strand" evidence="27">
    <location>
        <begin position="565"/>
        <end position="569"/>
    </location>
</feature>
<feature type="helix" evidence="27">
    <location>
        <begin position="574"/>
        <end position="584"/>
    </location>
</feature>
<feature type="strand" evidence="27">
    <location>
        <begin position="585"/>
        <end position="587"/>
    </location>
</feature>
<feature type="strand" evidence="27">
    <location>
        <begin position="592"/>
        <end position="595"/>
    </location>
</feature>
<feature type="helix" evidence="27">
    <location>
        <begin position="596"/>
        <end position="601"/>
    </location>
</feature>
<feature type="helix" evidence="27">
    <location>
        <begin position="604"/>
        <end position="610"/>
    </location>
</feature>
<feature type="turn" evidence="27">
    <location>
        <begin position="611"/>
        <end position="613"/>
    </location>
</feature>
<feature type="strand" evidence="27">
    <location>
        <begin position="614"/>
        <end position="619"/>
    </location>
</feature>
<feature type="helix" evidence="27">
    <location>
        <begin position="622"/>
        <end position="634"/>
    </location>
</feature>
<feature type="strand" evidence="27">
    <location>
        <begin position="638"/>
        <end position="642"/>
    </location>
</feature>
<feature type="helix" evidence="28">
    <location>
        <begin position="646"/>
        <end position="648"/>
    </location>
</feature>
<feature type="helix" evidence="27">
    <location>
        <begin position="649"/>
        <end position="654"/>
    </location>
</feature>
<feature type="strand" evidence="27">
    <location>
        <begin position="655"/>
        <end position="662"/>
    </location>
</feature>
<feature type="helix" evidence="27">
    <location>
        <begin position="667"/>
        <end position="672"/>
    </location>
</feature>
<feature type="strand" evidence="27">
    <location>
        <begin position="674"/>
        <end position="677"/>
    </location>
</feature>
<feature type="helix" evidence="27">
    <location>
        <begin position="683"/>
        <end position="691"/>
    </location>
</feature>
<feature type="turn" evidence="27">
    <location>
        <begin position="692"/>
        <end position="694"/>
    </location>
</feature>
<feature type="helix" evidence="27">
    <location>
        <begin position="695"/>
        <end position="722"/>
    </location>
</feature>
<feature type="helix" evidence="27">
    <location>
        <begin position="731"/>
        <end position="742"/>
    </location>
</feature>
<feature type="helix" evidence="27">
    <location>
        <begin position="744"/>
        <end position="750"/>
    </location>
</feature>
<feature type="helix" evidence="27">
    <location>
        <begin position="756"/>
        <end position="760"/>
    </location>
</feature>
<feature type="helix" evidence="27">
    <location>
        <begin position="773"/>
        <end position="797"/>
    </location>
</feature>
<feature type="turn" evidence="27">
    <location>
        <begin position="798"/>
        <end position="800"/>
    </location>
</feature>
<feature type="helix" evidence="27">
    <location>
        <begin position="805"/>
        <end position="826"/>
    </location>
</feature>
<feature type="strand" evidence="27">
    <location>
        <begin position="829"/>
        <end position="831"/>
    </location>
</feature>
<feature type="helix" evidence="27">
    <location>
        <begin position="833"/>
        <end position="836"/>
    </location>
</feature>
<feature type="strand" evidence="28">
    <location>
        <begin position="838"/>
        <end position="840"/>
    </location>
</feature>
<feature type="helix" evidence="27">
    <location>
        <begin position="842"/>
        <end position="860"/>
    </location>
</feature>
<feature type="helix" evidence="27">
    <location>
        <begin position="862"/>
        <end position="868"/>
    </location>
</feature>
<feature type="helix" evidence="27">
    <location>
        <begin position="875"/>
        <end position="903"/>
    </location>
</feature>
<keyword id="KW-0002">3D-structure</keyword>
<keyword id="KW-0025">Alternative splicing</keyword>
<keyword id="KW-0067">ATP-binding</keyword>
<keyword id="KW-0106">Calcium</keyword>
<keyword id="KW-0109">Calcium transport</keyword>
<keyword id="KW-0225">Disease variant</keyword>
<keyword id="KW-0333">Golgi apparatus</keyword>
<keyword id="KW-0406">Ion transport</keyword>
<keyword id="KW-0460">Magnesium</keyword>
<keyword id="KW-0472">Membrane</keyword>
<keyword id="KW-0479">Metal-binding</keyword>
<keyword id="KW-0547">Nucleotide-binding</keyword>
<keyword id="KW-1267">Proteomics identification</keyword>
<keyword id="KW-1185">Reference proteome</keyword>
<keyword id="KW-1278">Translocase</keyword>
<keyword id="KW-0812">Transmembrane</keyword>
<keyword id="KW-1133">Transmembrane helix</keyword>
<keyword id="KW-0813">Transport</keyword>